<name>RUTF1_METC4</name>
<feature type="chain" id="PRO_0000403031" description="FMN reductase (NADH) RutF 1">
    <location>
        <begin position="1"/>
        <end position="201"/>
    </location>
</feature>
<feature type="region of interest" description="Disordered" evidence="2">
    <location>
        <begin position="167"/>
        <end position="201"/>
    </location>
</feature>
<feature type="compositionally biased region" description="Low complexity" evidence="2">
    <location>
        <begin position="167"/>
        <end position="195"/>
    </location>
</feature>
<dbReference type="EC" id="1.5.1.42" evidence="1"/>
<dbReference type="EMBL" id="CP001298">
    <property type="protein sequence ID" value="ACK82900.1"/>
    <property type="molecule type" value="Genomic_DNA"/>
</dbReference>
<dbReference type="RefSeq" id="WP_015950621.1">
    <property type="nucleotide sequence ID" value="NC_011757.1"/>
</dbReference>
<dbReference type="SMR" id="B7KWT3"/>
<dbReference type="KEGG" id="mch:Mchl_2053"/>
<dbReference type="HOGENOM" id="CLU_059021_2_2_5"/>
<dbReference type="Proteomes" id="UP000002385">
    <property type="component" value="Chromosome"/>
</dbReference>
<dbReference type="GO" id="GO:0010181">
    <property type="term" value="F:FMN binding"/>
    <property type="evidence" value="ECO:0007669"/>
    <property type="project" value="InterPro"/>
</dbReference>
<dbReference type="GO" id="GO:0052874">
    <property type="term" value="F:FMN reductase (NADH) activity"/>
    <property type="evidence" value="ECO:0007669"/>
    <property type="project" value="UniProtKB-EC"/>
</dbReference>
<dbReference type="GO" id="GO:0008752">
    <property type="term" value="F:FMN reductase [NAD(P)H] activity"/>
    <property type="evidence" value="ECO:0007669"/>
    <property type="project" value="InterPro"/>
</dbReference>
<dbReference type="GO" id="GO:0042602">
    <property type="term" value="F:riboflavin reductase (NADPH) activity"/>
    <property type="evidence" value="ECO:0007669"/>
    <property type="project" value="UniProtKB-UniRule"/>
</dbReference>
<dbReference type="GO" id="GO:0019740">
    <property type="term" value="P:nitrogen utilization"/>
    <property type="evidence" value="ECO:0007669"/>
    <property type="project" value="UniProtKB-UniRule"/>
</dbReference>
<dbReference type="GO" id="GO:0006212">
    <property type="term" value="P:uracil catabolic process"/>
    <property type="evidence" value="ECO:0007669"/>
    <property type="project" value="UniProtKB-UniRule"/>
</dbReference>
<dbReference type="Gene3D" id="2.30.110.10">
    <property type="entry name" value="Electron Transport, Fmn-binding Protein, Chain A"/>
    <property type="match status" value="1"/>
</dbReference>
<dbReference type="HAMAP" id="MF_00833">
    <property type="entry name" value="RutF"/>
    <property type="match status" value="1"/>
</dbReference>
<dbReference type="InterPro" id="IPR002563">
    <property type="entry name" value="Flavin_Rdtase-like_dom"/>
</dbReference>
<dbReference type="InterPro" id="IPR050268">
    <property type="entry name" value="NADH-dep_flavin_reductase"/>
</dbReference>
<dbReference type="InterPro" id="IPR019917">
    <property type="entry name" value="RutF"/>
</dbReference>
<dbReference type="InterPro" id="IPR012349">
    <property type="entry name" value="Split_barrel_FMN-bd"/>
</dbReference>
<dbReference type="NCBIfam" id="TIGR03615">
    <property type="entry name" value="RutF"/>
    <property type="match status" value="1"/>
</dbReference>
<dbReference type="PANTHER" id="PTHR30466">
    <property type="entry name" value="FLAVIN REDUCTASE"/>
    <property type="match status" value="1"/>
</dbReference>
<dbReference type="PANTHER" id="PTHR30466:SF1">
    <property type="entry name" value="FMN REDUCTASE (NADH) RUTF"/>
    <property type="match status" value="1"/>
</dbReference>
<dbReference type="Pfam" id="PF01613">
    <property type="entry name" value="Flavin_Reduct"/>
    <property type="match status" value="1"/>
</dbReference>
<dbReference type="SMART" id="SM00903">
    <property type="entry name" value="Flavin_Reduct"/>
    <property type="match status" value="1"/>
</dbReference>
<dbReference type="SUPFAM" id="SSF50475">
    <property type="entry name" value="FMN-binding split barrel"/>
    <property type="match status" value="1"/>
</dbReference>
<keyword id="KW-0285">Flavoprotein</keyword>
<keyword id="KW-0288">FMN</keyword>
<keyword id="KW-0520">NAD</keyword>
<keyword id="KW-0560">Oxidoreductase</keyword>
<gene>
    <name evidence="1" type="primary">rutF1</name>
    <name type="ordered locus">Mchl_2053</name>
</gene>
<comment type="function">
    <text evidence="1">Catalyzes the reduction of FMN to FMNH2 which is used to reduce pyrimidine by RutA via the Rut pathway.</text>
</comment>
<comment type="catalytic activity">
    <reaction evidence="1">
        <text>FMNH2 + NAD(+) = FMN + NADH + 2 H(+)</text>
        <dbReference type="Rhea" id="RHEA:21620"/>
        <dbReference type="ChEBI" id="CHEBI:15378"/>
        <dbReference type="ChEBI" id="CHEBI:57540"/>
        <dbReference type="ChEBI" id="CHEBI:57618"/>
        <dbReference type="ChEBI" id="CHEBI:57945"/>
        <dbReference type="ChEBI" id="CHEBI:58210"/>
        <dbReference type="EC" id="1.5.1.42"/>
    </reaction>
</comment>
<comment type="similarity">
    <text evidence="1">Belongs to the non-flavoprotein flavin reductase family. RutF subfamily.</text>
</comment>
<reference key="1">
    <citation type="submission" date="2008-12" db="EMBL/GenBank/DDBJ databases">
        <title>Complete sequence of chromosome of Methylobacterium chloromethanicum CM4.</title>
        <authorList>
            <consortium name="US DOE Joint Genome Institute"/>
            <person name="Lucas S."/>
            <person name="Copeland A."/>
            <person name="Lapidus A."/>
            <person name="Glavina del Rio T."/>
            <person name="Dalin E."/>
            <person name="Tice H."/>
            <person name="Bruce D."/>
            <person name="Goodwin L."/>
            <person name="Pitluck S."/>
            <person name="Chertkov O."/>
            <person name="Brettin T."/>
            <person name="Detter J.C."/>
            <person name="Han C."/>
            <person name="Larimer F."/>
            <person name="Land M."/>
            <person name="Hauser L."/>
            <person name="Kyrpides N."/>
            <person name="Mikhailova N."/>
            <person name="Marx C."/>
            <person name="Richardson P."/>
        </authorList>
    </citation>
    <scope>NUCLEOTIDE SEQUENCE [LARGE SCALE GENOMIC DNA]</scope>
    <source>
        <strain>CM4 / NCIMB 13688</strain>
    </source>
</reference>
<organism>
    <name type="scientific">Methylorubrum extorquens (strain CM4 / NCIMB 13688)</name>
    <name type="common">Methylobacterium extorquens</name>
    <dbReference type="NCBI Taxonomy" id="440085"/>
    <lineage>
        <taxon>Bacteria</taxon>
        <taxon>Pseudomonadati</taxon>
        <taxon>Pseudomonadota</taxon>
        <taxon>Alphaproteobacteria</taxon>
        <taxon>Hyphomicrobiales</taxon>
        <taxon>Methylobacteriaceae</taxon>
        <taxon>Methylorubrum</taxon>
    </lineage>
</organism>
<protein>
    <recommendedName>
        <fullName evidence="1">FMN reductase (NADH) RutF 1</fullName>
        <ecNumber evidence="1">1.5.1.42</ecNumber>
    </recommendedName>
    <alternativeName>
        <fullName evidence="1">FMN reductase 1</fullName>
    </alternativeName>
    <alternativeName>
        <fullName evidence="1">NADH-flavin reductase RutF 1</fullName>
    </alternativeName>
    <alternativeName>
        <fullName evidence="1">NADH:flavin oxidoreductase 1</fullName>
    </alternativeName>
</protein>
<proteinExistence type="inferred from homology"/>
<sequence length="201" mass="20604">MTESESAAVPVDAAAFREAMSRLASAVHLITTDGPGGRAGFTASAVCSVSDAPPTLLVCINRASSAYAALTQNGTLCVNTLGEGHETVASLFGGRTPVDERFAAGTWRRLRSGAPALADALVSFDCRIVGRHAVGSHDVLYCAVEAVAASGQADALLYSERRYRTLPRAPRSGSAPAEPARAARAVGARPAEGPALALRSA</sequence>
<accession>B7KWT3</accession>
<evidence type="ECO:0000255" key="1">
    <source>
        <dbReference type="HAMAP-Rule" id="MF_00833"/>
    </source>
</evidence>
<evidence type="ECO:0000256" key="2">
    <source>
        <dbReference type="SAM" id="MobiDB-lite"/>
    </source>
</evidence>